<comment type="function">
    <text evidence="1">Catalyzes the last two sequential reactions in the de novo biosynthetic pathway for UDP-N-acetylglucosamine (UDP-GlcNAc). The C-terminal domain catalyzes the transfer of acetyl group from acetyl coenzyme A to glucosamine-1-phosphate (GlcN-1-P) to produce N-acetylglucosamine-1-phosphate (GlcNAc-1-P), which is converted into UDP-GlcNAc by the transfer of uridine 5-monophosphate (from uridine 5-triphosphate), a reaction catalyzed by the N-terminal domain.</text>
</comment>
<comment type="catalytic activity">
    <reaction evidence="1">
        <text>alpha-D-glucosamine 1-phosphate + acetyl-CoA = N-acetyl-alpha-D-glucosamine 1-phosphate + CoA + H(+)</text>
        <dbReference type="Rhea" id="RHEA:13725"/>
        <dbReference type="ChEBI" id="CHEBI:15378"/>
        <dbReference type="ChEBI" id="CHEBI:57287"/>
        <dbReference type="ChEBI" id="CHEBI:57288"/>
        <dbReference type="ChEBI" id="CHEBI:57776"/>
        <dbReference type="ChEBI" id="CHEBI:58516"/>
        <dbReference type="EC" id="2.3.1.157"/>
    </reaction>
</comment>
<comment type="catalytic activity">
    <reaction evidence="1">
        <text>N-acetyl-alpha-D-glucosamine 1-phosphate + UTP + H(+) = UDP-N-acetyl-alpha-D-glucosamine + diphosphate</text>
        <dbReference type="Rhea" id="RHEA:13509"/>
        <dbReference type="ChEBI" id="CHEBI:15378"/>
        <dbReference type="ChEBI" id="CHEBI:33019"/>
        <dbReference type="ChEBI" id="CHEBI:46398"/>
        <dbReference type="ChEBI" id="CHEBI:57705"/>
        <dbReference type="ChEBI" id="CHEBI:57776"/>
        <dbReference type="EC" id="2.7.7.23"/>
    </reaction>
</comment>
<comment type="cofactor">
    <cofactor evidence="1">
        <name>Mg(2+)</name>
        <dbReference type="ChEBI" id="CHEBI:18420"/>
    </cofactor>
    <text evidence="1">Binds 1 Mg(2+) ion per subunit.</text>
</comment>
<comment type="pathway">
    <text evidence="1">Nucleotide-sugar biosynthesis; UDP-N-acetyl-alpha-D-glucosamine biosynthesis; N-acetyl-alpha-D-glucosamine 1-phosphate from alpha-D-glucosamine 6-phosphate (route II): step 2/2.</text>
</comment>
<comment type="pathway">
    <text evidence="1">Nucleotide-sugar biosynthesis; UDP-N-acetyl-alpha-D-glucosamine biosynthesis; UDP-N-acetyl-alpha-D-glucosamine from N-acetyl-alpha-D-glucosamine 1-phosphate: step 1/1.</text>
</comment>
<comment type="pathway">
    <text evidence="1">Bacterial outer membrane biogenesis; LPS lipid A biosynthesis.</text>
</comment>
<comment type="subunit">
    <text evidence="1">Homotrimer.</text>
</comment>
<comment type="subcellular location">
    <subcellularLocation>
        <location evidence="1">Cytoplasm</location>
    </subcellularLocation>
</comment>
<comment type="similarity">
    <text evidence="1">In the N-terminal section; belongs to the N-acetylglucosamine-1-phosphate uridyltransferase family.</text>
</comment>
<comment type="similarity">
    <text evidence="1">In the C-terminal section; belongs to the transferase hexapeptide repeat family.</text>
</comment>
<dbReference type="EC" id="2.7.7.23" evidence="1"/>
<dbReference type="EC" id="2.3.1.157" evidence="1"/>
<dbReference type="EMBL" id="CP000416">
    <property type="protein sequence ID" value="ABJ63633.1"/>
    <property type="molecule type" value="Genomic_DNA"/>
</dbReference>
<dbReference type="RefSeq" id="WP_011667259.1">
    <property type="nucleotide sequence ID" value="NC_008497.1"/>
</dbReference>
<dbReference type="SMR" id="Q03T39"/>
<dbReference type="STRING" id="387344.LVIS_0475"/>
<dbReference type="KEGG" id="lbr:LVIS_0475"/>
<dbReference type="PATRIC" id="fig|387344.15.peg.466"/>
<dbReference type="eggNOG" id="COG1207">
    <property type="taxonomic scope" value="Bacteria"/>
</dbReference>
<dbReference type="HOGENOM" id="CLU_029499_15_2_9"/>
<dbReference type="UniPathway" id="UPA00113">
    <property type="reaction ID" value="UER00532"/>
</dbReference>
<dbReference type="UniPathway" id="UPA00113">
    <property type="reaction ID" value="UER00533"/>
</dbReference>
<dbReference type="UniPathway" id="UPA00973"/>
<dbReference type="Proteomes" id="UP000001652">
    <property type="component" value="Chromosome"/>
</dbReference>
<dbReference type="GO" id="GO:0005737">
    <property type="term" value="C:cytoplasm"/>
    <property type="evidence" value="ECO:0007669"/>
    <property type="project" value="UniProtKB-SubCell"/>
</dbReference>
<dbReference type="GO" id="GO:0016020">
    <property type="term" value="C:membrane"/>
    <property type="evidence" value="ECO:0007669"/>
    <property type="project" value="GOC"/>
</dbReference>
<dbReference type="GO" id="GO:0019134">
    <property type="term" value="F:glucosamine-1-phosphate N-acetyltransferase activity"/>
    <property type="evidence" value="ECO:0007669"/>
    <property type="project" value="UniProtKB-UniRule"/>
</dbReference>
<dbReference type="GO" id="GO:0000287">
    <property type="term" value="F:magnesium ion binding"/>
    <property type="evidence" value="ECO:0007669"/>
    <property type="project" value="UniProtKB-UniRule"/>
</dbReference>
<dbReference type="GO" id="GO:0003977">
    <property type="term" value="F:UDP-N-acetylglucosamine diphosphorylase activity"/>
    <property type="evidence" value="ECO:0007669"/>
    <property type="project" value="UniProtKB-UniRule"/>
</dbReference>
<dbReference type="GO" id="GO:0000902">
    <property type="term" value="P:cell morphogenesis"/>
    <property type="evidence" value="ECO:0007669"/>
    <property type="project" value="UniProtKB-UniRule"/>
</dbReference>
<dbReference type="GO" id="GO:0071555">
    <property type="term" value="P:cell wall organization"/>
    <property type="evidence" value="ECO:0007669"/>
    <property type="project" value="UniProtKB-KW"/>
</dbReference>
<dbReference type="GO" id="GO:0009245">
    <property type="term" value="P:lipid A biosynthetic process"/>
    <property type="evidence" value="ECO:0007669"/>
    <property type="project" value="UniProtKB-UniRule"/>
</dbReference>
<dbReference type="GO" id="GO:0009252">
    <property type="term" value="P:peptidoglycan biosynthetic process"/>
    <property type="evidence" value="ECO:0007669"/>
    <property type="project" value="UniProtKB-UniRule"/>
</dbReference>
<dbReference type="GO" id="GO:0008360">
    <property type="term" value="P:regulation of cell shape"/>
    <property type="evidence" value="ECO:0007669"/>
    <property type="project" value="UniProtKB-KW"/>
</dbReference>
<dbReference type="GO" id="GO:0006048">
    <property type="term" value="P:UDP-N-acetylglucosamine biosynthetic process"/>
    <property type="evidence" value="ECO:0007669"/>
    <property type="project" value="UniProtKB-UniPathway"/>
</dbReference>
<dbReference type="CDD" id="cd02540">
    <property type="entry name" value="GT2_GlmU_N_bac"/>
    <property type="match status" value="1"/>
</dbReference>
<dbReference type="CDD" id="cd03353">
    <property type="entry name" value="LbH_GlmU_C"/>
    <property type="match status" value="1"/>
</dbReference>
<dbReference type="Gene3D" id="2.160.10.10">
    <property type="entry name" value="Hexapeptide repeat proteins"/>
    <property type="match status" value="1"/>
</dbReference>
<dbReference type="Gene3D" id="3.90.550.10">
    <property type="entry name" value="Spore Coat Polysaccharide Biosynthesis Protein SpsA, Chain A"/>
    <property type="match status" value="1"/>
</dbReference>
<dbReference type="HAMAP" id="MF_01631">
    <property type="entry name" value="GlmU"/>
    <property type="match status" value="1"/>
</dbReference>
<dbReference type="InterPro" id="IPR005882">
    <property type="entry name" value="Bifunctional_GlmU"/>
</dbReference>
<dbReference type="InterPro" id="IPR050065">
    <property type="entry name" value="GlmU-like"/>
</dbReference>
<dbReference type="InterPro" id="IPR038009">
    <property type="entry name" value="GlmU_C_LbH"/>
</dbReference>
<dbReference type="InterPro" id="IPR001451">
    <property type="entry name" value="Hexapep"/>
</dbReference>
<dbReference type="InterPro" id="IPR018357">
    <property type="entry name" value="Hexapep_transf_CS"/>
</dbReference>
<dbReference type="InterPro" id="IPR005835">
    <property type="entry name" value="NTP_transferase_dom"/>
</dbReference>
<dbReference type="InterPro" id="IPR029044">
    <property type="entry name" value="Nucleotide-diphossugar_trans"/>
</dbReference>
<dbReference type="InterPro" id="IPR011004">
    <property type="entry name" value="Trimer_LpxA-like_sf"/>
</dbReference>
<dbReference type="NCBIfam" id="TIGR01173">
    <property type="entry name" value="glmU"/>
    <property type="match status" value="1"/>
</dbReference>
<dbReference type="NCBIfam" id="NF010934">
    <property type="entry name" value="PRK14354.1"/>
    <property type="match status" value="1"/>
</dbReference>
<dbReference type="PANTHER" id="PTHR43584:SF3">
    <property type="entry name" value="BIFUNCTIONAL PROTEIN GLMU"/>
    <property type="match status" value="1"/>
</dbReference>
<dbReference type="PANTHER" id="PTHR43584">
    <property type="entry name" value="NUCLEOTIDYL TRANSFERASE"/>
    <property type="match status" value="1"/>
</dbReference>
<dbReference type="Pfam" id="PF00132">
    <property type="entry name" value="Hexapep"/>
    <property type="match status" value="1"/>
</dbReference>
<dbReference type="Pfam" id="PF14602">
    <property type="entry name" value="Hexapep_2"/>
    <property type="match status" value="1"/>
</dbReference>
<dbReference type="Pfam" id="PF00483">
    <property type="entry name" value="NTP_transferase"/>
    <property type="match status" value="1"/>
</dbReference>
<dbReference type="SUPFAM" id="SSF53448">
    <property type="entry name" value="Nucleotide-diphospho-sugar transferases"/>
    <property type="match status" value="1"/>
</dbReference>
<dbReference type="SUPFAM" id="SSF51161">
    <property type="entry name" value="Trimeric LpxA-like enzymes"/>
    <property type="match status" value="1"/>
</dbReference>
<dbReference type="PROSITE" id="PS00101">
    <property type="entry name" value="HEXAPEP_TRANSFERASES"/>
    <property type="match status" value="1"/>
</dbReference>
<evidence type="ECO:0000255" key="1">
    <source>
        <dbReference type="HAMAP-Rule" id="MF_01631"/>
    </source>
</evidence>
<gene>
    <name evidence="1" type="primary">glmU</name>
    <name type="ordered locus">LVIS_0475</name>
</gene>
<organism>
    <name type="scientific">Levilactobacillus brevis (strain ATCC 367 / BCRC 12310 / CIP 105137 / JCM 1170 / LMG 11437 / NCIMB 947 / NCTC 947)</name>
    <name type="common">Lactobacillus brevis</name>
    <dbReference type="NCBI Taxonomy" id="387344"/>
    <lineage>
        <taxon>Bacteria</taxon>
        <taxon>Bacillati</taxon>
        <taxon>Bacillota</taxon>
        <taxon>Bacilli</taxon>
        <taxon>Lactobacillales</taxon>
        <taxon>Lactobacillaceae</taxon>
        <taxon>Levilactobacillus</taxon>
    </lineage>
</organism>
<reference key="1">
    <citation type="journal article" date="2006" name="Proc. Natl. Acad. Sci. U.S.A.">
        <title>Comparative genomics of the lactic acid bacteria.</title>
        <authorList>
            <person name="Makarova K.S."/>
            <person name="Slesarev A."/>
            <person name="Wolf Y.I."/>
            <person name="Sorokin A."/>
            <person name="Mirkin B."/>
            <person name="Koonin E.V."/>
            <person name="Pavlov A."/>
            <person name="Pavlova N."/>
            <person name="Karamychev V."/>
            <person name="Polouchine N."/>
            <person name="Shakhova V."/>
            <person name="Grigoriev I."/>
            <person name="Lou Y."/>
            <person name="Rohksar D."/>
            <person name="Lucas S."/>
            <person name="Huang K."/>
            <person name="Goodstein D.M."/>
            <person name="Hawkins T."/>
            <person name="Plengvidhya V."/>
            <person name="Welker D."/>
            <person name="Hughes J."/>
            <person name="Goh Y."/>
            <person name="Benson A."/>
            <person name="Baldwin K."/>
            <person name="Lee J.-H."/>
            <person name="Diaz-Muniz I."/>
            <person name="Dosti B."/>
            <person name="Smeianov V."/>
            <person name="Wechter W."/>
            <person name="Barabote R."/>
            <person name="Lorca G."/>
            <person name="Altermann E."/>
            <person name="Barrangou R."/>
            <person name="Ganesan B."/>
            <person name="Xie Y."/>
            <person name="Rawsthorne H."/>
            <person name="Tamir D."/>
            <person name="Parker C."/>
            <person name="Breidt F."/>
            <person name="Broadbent J.R."/>
            <person name="Hutkins R."/>
            <person name="O'Sullivan D."/>
            <person name="Steele J."/>
            <person name="Unlu G."/>
            <person name="Saier M.H. Jr."/>
            <person name="Klaenhammer T."/>
            <person name="Richardson P."/>
            <person name="Kozyavkin S."/>
            <person name="Weimer B.C."/>
            <person name="Mills D.A."/>
        </authorList>
    </citation>
    <scope>NUCLEOTIDE SEQUENCE [LARGE SCALE GENOMIC DNA]</scope>
    <source>
        <strain>ATCC 367 / BCRC 12310 / CIP 105137 / JCM 1170 / LMG 11437 / NCIMB 947 / NCTC 947</strain>
    </source>
</reference>
<sequence>MTTRNTIILAAGKGTRMKSKLYKVLHKVCGKAMVDHVLTQVEKTDMSKIVTVVGYGADEVKSTLGDRTQYALQAEQLGTGHAVLQTEPMLKDEAGTTLIVSGDTPLFRAETFEDLFAYHEAKHAAATILTSMAPDPTGYGRIVRNNIGIVEKIVEQKDANSEEQEIHEINTGVYVFDNQKLFKALHETSNDNAQGEYYLTDVIEILKQQGDIVAAYQMANFDESMGVNDRVALSAATKIMRDRINEAHMRDGVTLIDPATTYIDAGVKIGADTIIEPGVLLKGNTVIGEDCYIGAHSELRNAVLADHVTVTSSLLEDSDMASGSNIGPNSHLRPESHIGPKVHLGNFVEVKKATIGEGTKVGHLTYVGNAKLGRNINVGCGVVFVNYDGKNKHETVVGDDAFIGSNSNLVAPLDVADHSFIAAGSTITDAVNRYDMAIARQRQTNKPNYYQKLPYRGED</sequence>
<protein>
    <recommendedName>
        <fullName evidence="1">Bifunctional protein GlmU</fullName>
    </recommendedName>
    <domain>
        <recommendedName>
            <fullName evidence="1">UDP-N-acetylglucosamine pyrophosphorylase</fullName>
            <ecNumber evidence="1">2.7.7.23</ecNumber>
        </recommendedName>
        <alternativeName>
            <fullName evidence="1">N-acetylglucosamine-1-phosphate uridyltransferase</fullName>
        </alternativeName>
    </domain>
    <domain>
        <recommendedName>
            <fullName evidence="1">Glucosamine-1-phosphate N-acetyltransferase</fullName>
            <ecNumber evidence="1">2.3.1.157</ecNumber>
        </recommendedName>
    </domain>
</protein>
<accession>Q03T39</accession>
<keyword id="KW-0012">Acyltransferase</keyword>
<keyword id="KW-0133">Cell shape</keyword>
<keyword id="KW-0961">Cell wall biogenesis/degradation</keyword>
<keyword id="KW-0963">Cytoplasm</keyword>
<keyword id="KW-0460">Magnesium</keyword>
<keyword id="KW-0479">Metal-binding</keyword>
<keyword id="KW-0511">Multifunctional enzyme</keyword>
<keyword id="KW-0548">Nucleotidyltransferase</keyword>
<keyword id="KW-0573">Peptidoglycan synthesis</keyword>
<keyword id="KW-1185">Reference proteome</keyword>
<keyword id="KW-0677">Repeat</keyword>
<keyword id="KW-0808">Transferase</keyword>
<name>GLMU_LEVBA</name>
<feature type="chain" id="PRO_1000056166" description="Bifunctional protein GlmU">
    <location>
        <begin position="1"/>
        <end position="459"/>
    </location>
</feature>
<feature type="region of interest" description="Pyrophosphorylase" evidence="1">
    <location>
        <begin position="1"/>
        <end position="230"/>
    </location>
</feature>
<feature type="region of interest" description="Linker" evidence="1">
    <location>
        <begin position="231"/>
        <end position="251"/>
    </location>
</feature>
<feature type="region of interest" description="N-acetyltransferase" evidence="1">
    <location>
        <begin position="252"/>
        <end position="459"/>
    </location>
</feature>
<feature type="active site" description="Proton acceptor" evidence="1">
    <location>
        <position position="363"/>
    </location>
</feature>
<feature type="binding site" evidence="1">
    <location>
        <begin position="9"/>
        <end position="12"/>
    </location>
    <ligand>
        <name>UDP-N-acetyl-alpha-D-glucosamine</name>
        <dbReference type="ChEBI" id="CHEBI:57705"/>
    </ligand>
</feature>
<feature type="binding site" evidence="1">
    <location>
        <position position="23"/>
    </location>
    <ligand>
        <name>UDP-N-acetyl-alpha-D-glucosamine</name>
        <dbReference type="ChEBI" id="CHEBI:57705"/>
    </ligand>
</feature>
<feature type="binding site" evidence="1">
    <location>
        <position position="73"/>
    </location>
    <ligand>
        <name>UDP-N-acetyl-alpha-D-glucosamine</name>
        <dbReference type="ChEBI" id="CHEBI:57705"/>
    </ligand>
</feature>
<feature type="binding site" evidence="1">
    <location>
        <begin position="78"/>
        <end position="79"/>
    </location>
    <ligand>
        <name>UDP-N-acetyl-alpha-D-glucosamine</name>
        <dbReference type="ChEBI" id="CHEBI:57705"/>
    </ligand>
</feature>
<feature type="binding site" evidence="1">
    <location>
        <begin position="101"/>
        <end position="103"/>
    </location>
    <ligand>
        <name>UDP-N-acetyl-alpha-D-glucosamine</name>
        <dbReference type="ChEBI" id="CHEBI:57705"/>
    </ligand>
</feature>
<feature type="binding site" evidence="1">
    <location>
        <position position="103"/>
    </location>
    <ligand>
        <name>Mg(2+)</name>
        <dbReference type="ChEBI" id="CHEBI:18420"/>
    </ligand>
</feature>
<feature type="binding site" evidence="1">
    <location>
        <position position="140"/>
    </location>
    <ligand>
        <name>UDP-N-acetyl-alpha-D-glucosamine</name>
        <dbReference type="ChEBI" id="CHEBI:57705"/>
    </ligand>
</feature>
<feature type="binding site" evidence="1">
    <location>
        <position position="155"/>
    </location>
    <ligand>
        <name>UDP-N-acetyl-alpha-D-glucosamine</name>
        <dbReference type="ChEBI" id="CHEBI:57705"/>
    </ligand>
</feature>
<feature type="binding site" evidence="1">
    <location>
        <position position="170"/>
    </location>
    <ligand>
        <name>UDP-N-acetyl-alpha-D-glucosamine</name>
        <dbReference type="ChEBI" id="CHEBI:57705"/>
    </ligand>
</feature>
<feature type="binding site" evidence="1">
    <location>
        <position position="228"/>
    </location>
    <ligand>
        <name>Mg(2+)</name>
        <dbReference type="ChEBI" id="CHEBI:18420"/>
    </ligand>
</feature>
<feature type="binding site" evidence="1">
    <location>
        <position position="228"/>
    </location>
    <ligand>
        <name>UDP-N-acetyl-alpha-D-glucosamine</name>
        <dbReference type="ChEBI" id="CHEBI:57705"/>
    </ligand>
</feature>
<feature type="binding site" evidence="1">
    <location>
        <position position="333"/>
    </location>
    <ligand>
        <name>UDP-N-acetyl-alpha-D-glucosamine</name>
        <dbReference type="ChEBI" id="CHEBI:57705"/>
    </ligand>
</feature>
<feature type="binding site" evidence="1">
    <location>
        <position position="351"/>
    </location>
    <ligand>
        <name>UDP-N-acetyl-alpha-D-glucosamine</name>
        <dbReference type="ChEBI" id="CHEBI:57705"/>
    </ligand>
</feature>
<feature type="binding site" evidence="1">
    <location>
        <position position="366"/>
    </location>
    <ligand>
        <name>UDP-N-acetyl-alpha-D-glucosamine</name>
        <dbReference type="ChEBI" id="CHEBI:57705"/>
    </ligand>
</feature>
<feature type="binding site" evidence="1">
    <location>
        <position position="377"/>
    </location>
    <ligand>
        <name>UDP-N-acetyl-alpha-D-glucosamine</name>
        <dbReference type="ChEBI" id="CHEBI:57705"/>
    </ligand>
</feature>
<feature type="binding site" evidence="1">
    <location>
        <begin position="386"/>
        <end position="387"/>
    </location>
    <ligand>
        <name>acetyl-CoA</name>
        <dbReference type="ChEBI" id="CHEBI:57288"/>
    </ligand>
</feature>
<feature type="binding site" evidence="1">
    <location>
        <position position="405"/>
    </location>
    <ligand>
        <name>acetyl-CoA</name>
        <dbReference type="ChEBI" id="CHEBI:57288"/>
    </ligand>
</feature>
<feature type="binding site" evidence="1">
    <location>
        <position position="423"/>
    </location>
    <ligand>
        <name>acetyl-CoA</name>
        <dbReference type="ChEBI" id="CHEBI:57288"/>
    </ligand>
</feature>
<feature type="binding site" evidence="1">
    <location>
        <position position="440"/>
    </location>
    <ligand>
        <name>acetyl-CoA</name>
        <dbReference type="ChEBI" id="CHEBI:57288"/>
    </ligand>
</feature>
<proteinExistence type="inferred from homology"/>